<keyword id="KW-1185">Reference proteome</keyword>
<keyword id="KW-0687">Ribonucleoprotein</keyword>
<keyword id="KW-0689">Ribosomal protein</keyword>
<keyword id="KW-0694">RNA-binding</keyword>
<keyword id="KW-0699">rRNA-binding</keyword>
<accession>B8H4E0</accession>
<reference key="1">
    <citation type="journal article" date="2010" name="J. Bacteriol.">
        <title>The genetic basis of laboratory adaptation in Caulobacter crescentus.</title>
        <authorList>
            <person name="Marks M.E."/>
            <person name="Castro-Rojas C.M."/>
            <person name="Teiling C."/>
            <person name="Du L."/>
            <person name="Kapatral V."/>
            <person name="Walunas T.L."/>
            <person name="Crosson S."/>
        </authorList>
    </citation>
    <scope>NUCLEOTIDE SEQUENCE [LARGE SCALE GENOMIC DNA]</scope>
    <source>
        <strain>NA1000 / CB15N</strain>
    </source>
</reference>
<proteinExistence type="inferred from homology"/>
<name>RS3_CAUVN</name>
<protein>
    <recommendedName>
        <fullName evidence="1">Small ribosomal subunit protein uS3</fullName>
    </recommendedName>
    <alternativeName>
        <fullName evidence="3">30S ribosomal protein S3</fullName>
    </alternativeName>
</protein>
<evidence type="ECO:0000255" key="1">
    <source>
        <dbReference type="HAMAP-Rule" id="MF_01309"/>
    </source>
</evidence>
<evidence type="ECO:0000256" key="2">
    <source>
        <dbReference type="SAM" id="MobiDB-lite"/>
    </source>
</evidence>
<evidence type="ECO:0000305" key="3"/>
<sequence>MGQKVNPVGLRLGINRTWDSRWFADGNQYGKLLHQDLAVRAALKKRLYQAGVSRIIIERPHKKCRVTIYAARPGVIIGKKGADIDKLRKDLSIMTEGEVHLNIVEIRKPETDAQLVAESIAQQLERRIAFRRAMKRSIQSAVRLGAKGIRINVSGRLGGAEIARMEWYREGRVPLHTLRADIDFGFAEAKTTYGIIGVKTWIFKGEVLEHDPMALDKRLATESGPAGEGGGRERGDRPDRGDRRDRRDRA</sequence>
<dbReference type="EMBL" id="CP001340">
    <property type="protein sequence ID" value="ACL94777.1"/>
    <property type="molecule type" value="Genomic_DNA"/>
</dbReference>
<dbReference type="RefSeq" id="WP_010919133.1">
    <property type="nucleotide sequence ID" value="NC_011916.1"/>
</dbReference>
<dbReference type="RefSeq" id="YP_002516685.1">
    <property type="nucleotide sequence ID" value="NC_011916.1"/>
</dbReference>
<dbReference type="SMR" id="B8H4E0"/>
<dbReference type="GeneID" id="7333044"/>
<dbReference type="KEGG" id="ccs:CCNA_01312"/>
<dbReference type="PATRIC" id="fig|565050.3.peg.1296"/>
<dbReference type="HOGENOM" id="CLU_058591_0_2_5"/>
<dbReference type="OrthoDB" id="9806396at2"/>
<dbReference type="PhylomeDB" id="B8H4E0"/>
<dbReference type="Proteomes" id="UP000001364">
    <property type="component" value="Chromosome"/>
</dbReference>
<dbReference type="GO" id="GO:0022627">
    <property type="term" value="C:cytosolic small ribosomal subunit"/>
    <property type="evidence" value="ECO:0007669"/>
    <property type="project" value="TreeGrafter"/>
</dbReference>
<dbReference type="GO" id="GO:0003729">
    <property type="term" value="F:mRNA binding"/>
    <property type="evidence" value="ECO:0007669"/>
    <property type="project" value="UniProtKB-UniRule"/>
</dbReference>
<dbReference type="GO" id="GO:0019843">
    <property type="term" value="F:rRNA binding"/>
    <property type="evidence" value="ECO:0007669"/>
    <property type="project" value="UniProtKB-UniRule"/>
</dbReference>
<dbReference type="GO" id="GO:0003735">
    <property type="term" value="F:structural constituent of ribosome"/>
    <property type="evidence" value="ECO:0007669"/>
    <property type="project" value="InterPro"/>
</dbReference>
<dbReference type="GO" id="GO:0006412">
    <property type="term" value="P:translation"/>
    <property type="evidence" value="ECO:0007669"/>
    <property type="project" value="UniProtKB-UniRule"/>
</dbReference>
<dbReference type="CDD" id="cd02412">
    <property type="entry name" value="KH-II_30S_S3"/>
    <property type="match status" value="1"/>
</dbReference>
<dbReference type="FunFam" id="3.30.1140.32:FF:000001">
    <property type="entry name" value="30S ribosomal protein S3"/>
    <property type="match status" value="1"/>
</dbReference>
<dbReference type="FunFam" id="3.30.300.20:FF:000001">
    <property type="entry name" value="30S ribosomal protein S3"/>
    <property type="match status" value="1"/>
</dbReference>
<dbReference type="Gene3D" id="3.30.300.20">
    <property type="match status" value="1"/>
</dbReference>
<dbReference type="Gene3D" id="3.30.1140.32">
    <property type="entry name" value="Ribosomal protein S3, C-terminal domain"/>
    <property type="match status" value="1"/>
</dbReference>
<dbReference type="HAMAP" id="MF_01309_B">
    <property type="entry name" value="Ribosomal_uS3_B"/>
    <property type="match status" value="1"/>
</dbReference>
<dbReference type="InterPro" id="IPR004087">
    <property type="entry name" value="KH_dom"/>
</dbReference>
<dbReference type="InterPro" id="IPR015946">
    <property type="entry name" value="KH_dom-like_a/b"/>
</dbReference>
<dbReference type="InterPro" id="IPR004044">
    <property type="entry name" value="KH_dom_type_2"/>
</dbReference>
<dbReference type="InterPro" id="IPR009019">
    <property type="entry name" value="KH_sf_prok-type"/>
</dbReference>
<dbReference type="InterPro" id="IPR036419">
    <property type="entry name" value="Ribosomal_S3_C_sf"/>
</dbReference>
<dbReference type="InterPro" id="IPR005704">
    <property type="entry name" value="Ribosomal_uS3_bac-typ"/>
</dbReference>
<dbReference type="InterPro" id="IPR001351">
    <property type="entry name" value="Ribosomal_uS3_C"/>
</dbReference>
<dbReference type="InterPro" id="IPR018280">
    <property type="entry name" value="Ribosomal_uS3_CS"/>
</dbReference>
<dbReference type="NCBIfam" id="TIGR01009">
    <property type="entry name" value="rpsC_bact"/>
    <property type="match status" value="1"/>
</dbReference>
<dbReference type="PANTHER" id="PTHR11760">
    <property type="entry name" value="30S/40S RIBOSOMAL PROTEIN S3"/>
    <property type="match status" value="1"/>
</dbReference>
<dbReference type="PANTHER" id="PTHR11760:SF19">
    <property type="entry name" value="SMALL RIBOSOMAL SUBUNIT PROTEIN US3C"/>
    <property type="match status" value="1"/>
</dbReference>
<dbReference type="Pfam" id="PF07650">
    <property type="entry name" value="KH_2"/>
    <property type="match status" value="1"/>
</dbReference>
<dbReference type="Pfam" id="PF00189">
    <property type="entry name" value="Ribosomal_S3_C"/>
    <property type="match status" value="1"/>
</dbReference>
<dbReference type="SMART" id="SM00322">
    <property type="entry name" value="KH"/>
    <property type="match status" value="1"/>
</dbReference>
<dbReference type="SUPFAM" id="SSF54814">
    <property type="entry name" value="Prokaryotic type KH domain (KH-domain type II)"/>
    <property type="match status" value="1"/>
</dbReference>
<dbReference type="SUPFAM" id="SSF54821">
    <property type="entry name" value="Ribosomal protein S3 C-terminal domain"/>
    <property type="match status" value="1"/>
</dbReference>
<dbReference type="PROSITE" id="PS50823">
    <property type="entry name" value="KH_TYPE_2"/>
    <property type="match status" value="1"/>
</dbReference>
<dbReference type="PROSITE" id="PS00548">
    <property type="entry name" value="RIBOSOMAL_S3"/>
    <property type="match status" value="1"/>
</dbReference>
<organism>
    <name type="scientific">Caulobacter vibrioides (strain NA1000 / CB15N)</name>
    <name type="common">Caulobacter crescentus</name>
    <dbReference type="NCBI Taxonomy" id="565050"/>
    <lineage>
        <taxon>Bacteria</taxon>
        <taxon>Pseudomonadati</taxon>
        <taxon>Pseudomonadota</taxon>
        <taxon>Alphaproteobacteria</taxon>
        <taxon>Caulobacterales</taxon>
        <taxon>Caulobacteraceae</taxon>
        <taxon>Caulobacter</taxon>
    </lineage>
</organism>
<comment type="function">
    <text evidence="1">Binds the lower part of the 30S subunit head. Binds mRNA in the 70S ribosome, positioning it for translation.</text>
</comment>
<comment type="subunit">
    <text evidence="1">Part of the 30S ribosomal subunit. Forms a tight complex with proteins S10 and S14.</text>
</comment>
<comment type="similarity">
    <text evidence="1">Belongs to the universal ribosomal protein uS3 family.</text>
</comment>
<feature type="chain" id="PRO_1000165485" description="Small ribosomal subunit protein uS3">
    <location>
        <begin position="1"/>
        <end position="250"/>
    </location>
</feature>
<feature type="domain" description="KH type-2" evidence="1">
    <location>
        <begin position="39"/>
        <end position="107"/>
    </location>
</feature>
<feature type="region of interest" description="Disordered" evidence="2">
    <location>
        <begin position="215"/>
        <end position="250"/>
    </location>
</feature>
<feature type="compositionally biased region" description="Basic and acidic residues" evidence="2">
    <location>
        <begin position="230"/>
        <end position="250"/>
    </location>
</feature>
<gene>
    <name evidence="1" type="primary">rpsC</name>
    <name type="ordered locus">CCNA_01312</name>
</gene>